<protein>
    <recommendedName>
        <fullName>Inosamine-phosphate amidinotransferase 1</fullName>
        <ecNumber>2.1.4.2</ecNumber>
    </recommendedName>
    <alternativeName>
        <fullName>Aminocyclitol amidinotransferase</fullName>
        <shortName>ADT</shortName>
    </alternativeName>
    <alternativeName>
        <fullName>Inosamine-phosphate amidinotransferase I</fullName>
    </alternativeName>
</protein>
<gene>
    <name type="primary">strB1</name>
</gene>
<accession>Q54258</accession>
<evidence type="ECO:0000250" key="1"/>
<evidence type="ECO:0000305" key="2"/>
<organism>
    <name type="scientific">Streptomyces glaucescens</name>
    <dbReference type="NCBI Taxonomy" id="1907"/>
    <lineage>
        <taxon>Bacteria</taxon>
        <taxon>Bacillati</taxon>
        <taxon>Actinomycetota</taxon>
        <taxon>Actinomycetes</taxon>
        <taxon>Kitasatosporales</taxon>
        <taxon>Streptomycetaceae</taxon>
        <taxon>Streptomyces</taxon>
    </lineage>
</organism>
<keyword id="KW-0045">Antibiotic biosynthesis</keyword>
<keyword id="KW-0759">Streptomycin biosynthesis</keyword>
<keyword id="KW-0808">Transferase</keyword>
<sequence length="348" mass="38592">MSLVSVHNEWDPLEEIIVGTAVGARVPRADRSVFAVEYADEYDSQDQVPAGPYPDRVLKETEEELHVLSEELTKLGVTVRRPGQRDNSALVATPDWQTDGFHDYCPRDGLLAVGQTVIESPMALRARFLESLAYKDILLEYFASGARWLSAPKPRLADEMYEPTAPAGQRLTDLEPVFDAANVLRFGTDLLYLVSDSGNELGAKWLQSALGSTYKVHPCRGLYASTHVDSTIVPLRPGLVLVNPARVNDDNMPDFLRSWQTVVCPELVDIGFTGDKPHCSVWIGMNLLVVRPDLAVVDRRQTGLIKVLEKHGVDVLPLQLTHSRTLGGGFHCATLDVRRTGSLETYRF</sequence>
<feature type="chain" id="PRO_0000215476" description="Inosamine-phosphate amidinotransferase 1">
    <location>
        <begin position="1"/>
        <end position="348"/>
    </location>
</feature>
<feature type="active site" evidence="1">
    <location>
        <position position="179"/>
    </location>
</feature>
<feature type="active site" evidence="1">
    <location>
        <position position="227"/>
    </location>
</feature>
<feature type="active site" description="Amidino-cysteine intermediate" evidence="1">
    <location>
        <position position="332"/>
    </location>
</feature>
<proteinExistence type="inferred from homology"/>
<dbReference type="EC" id="2.1.4.2"/>
<dbReference type="EMBL" id="X78974">
    <property type="protein sequence ID" value="CAA55571.1"/>
    <property type="molecule type" value="Genomic_DNA"/>
</dbReference>
<dbReference type="EMBL" id="AJ006985">
    <property type="protein sequence ID" value="CAA07380.1"/>
    <property type="molecule type" value="Genomic_DNA"/>
</dbReference>
<dbReference type="PIR" id="S44229">
    <property type="entry name" value="S44229"/>
</dbReference>
<dbReference type="RefSeq" id="WP_043497526.1">
    <property type="nucleotide sequence ID" value="NZ_CP009438.1"/>
</dbReference>
<dbReference type="SMR" id="Q54258"/>
<dbReference type="STRING" id="1907.SGLAU_01160"/>
<dbReference type="eggNOG" id="COG1834">
    <property type="taxonomic scope" value="Bacteria"/>
</dbReference>
<dbReference type="OrthoDB" id="258252at2"/>
<dbReference type="BRENDA" id="2.1.4.2">
    <property type="organism ID" value="6022"/>
</dbReference>
<dbReference type="UniPathway" id="UPA00066"/>
<dbReference type="GO" id="GO:0015068">
    <property type="term" value="F:glycine amidinotransferase activity"/>
    <property type="evidence" value="ECO:0007669"/>
    <property type="project" value="TreeGrafter"/>
</dbReference>
<dbReference type="GO" id="GO:0015069">
    <property type="term" value="F:scyllo-inosamine-4-phosphate amidinotransferase activity"/>
    <property type="evidence" value="ECO:0007669"/>
    <property type="project" value="UniProtKB-EC"/>
</dbReference>
<dbReference type="GO" id="GO:0006601">
    <property type="term" value="P:creatine biosynthetic process"/>
    <property type="evidence" value="ECO:0007669"/>
    <property type="project" value="TreeGrafter"/>
</dbReference>
<dbReference type="GO" id="GO:0019872">
    <property type="term" value="P:streptomycin biosynthetic process"/>
    <property type="evidence" value="ECO:0007669"/>
    <property type="project" value="UniProtKB-UniPathway"/>
</dbReference>
<dbReference type="CDD" id="cd21135">
    <property type="entry name" value="amidinotransferase_StrB1-like"/>
    <property type="match status" value="1"/>
</dbReference>
<dbReference type="Gene3D" id="3.75.10.10">
    <property type="entry name" value="L-arginine/glycine Amidinotransferase, Chain A"/>
    <property type="match status" value="1"/>
</dbReference>
<dbReference type="InterPro" id="IPR033195">
    <property type="entry name" value="AmidinoTrfase"/>
</dbReference>
<dbReference type="PANTHER" id="PTHR10488">
    <property type="entry name" value="GLYCINE AMIDINOTRANSFERASE, MITOCHONDRIAL"/>
    <property type="match status" value="1"/>
</dbReference>
<dbReference type="PANTHER" id="PTHR10488:SF1">
    <property type="entry name" value="GLYCINE AMIDINOTRANSFERASE, MITOCHONDRIAL"/>
    <property type="match status" value="1"/>
</dbReference>
<dbReference type="SUPFAM" id="SSF55909">
    <property type="entry name" value="Pentein"/>
    <property type="match status" value="1"/>
</dbReference>
<name>STRB1_STRGA</name>
<comment type="function">
    <text evidence="1">Catalyzes two non-consecutive transamidination reactions. It converts scyllo-inosamine 4-phosphate into N-amidino-scyllo-inosamine 4-phosphate and N1-amidinostreptamine 6-phosphate into streptidine 6-phosphate (By similarity).</text>
</comment>
<comment type="catalytic activity">
    <reaction>
        <text>1-amino-1-deoxy-scyllo-inositol 4-phosphate + L-arginine = 1-guanidino-1-deoxy-scyllo-inositol 4-phosphate + L-ornithine</text>
        <dbReference type="Rhea" id="RHEA:13265"/>
        <dbReference type="ChEBI" id="CHEBI:32682"/>
        <dbReference type="ChEBI" id="CHEBI:46911"/>
        <dbReference type="ChEBI" id="CHEBI:57656"/>
        <dbReference type="ChEBI" id="CHEBI:58325"/>
        <dbReference type="EC" id="2.1.4.2"/>
    </reaction>
</comment>
<comment type="pathway">
    <text>Antibiotic biosynthesis; streptomycin biosynthesis.</text>
</comment>
<comment type="subunit">
    <text evidence="1">Homodimer.</text>
</comment>
<comment type="similarity">
    <text evidence="2">Belongs to the amidinotransferase family.</text>
</comment>
<reference key="1">
    <citation type="submission" date="1998-06" db="EMBL/GenBank/DDBJ databases">
        <authorList>
            <person name="Mayer G."/>
            <person name="Piepersberg W."/>
        </authorList>
    </citation>
    <scope>NUCLEOTIDE SEQUENCE [GENOMIC DNA]</scope>
    <source>
        <strain>DSM 40716 / ETH 22794 / Tue 49</strain>
    </source>
</reference>